<feature type="chain" id="PRO_0000349498" description="tRNA-specific 2-thiouridylase MnmA">
    <location>
        <begin position="1"/>
        <end position="377"/>
    </location>
</feature>
<feature type="region of interest" description="Interaction with target base in tRNA" evidence="1">
    <location>
        <begin position="94"/>
        <end position="96"/>
    </location>
</feature>
<feature type="region of interest" description="Interaction with tRNA" evidence="1">
    <location>
        <begin position="151"/>
        <end position="153"/>
    </location>
</feature>
<feature type="region of interest" description="Interaction with tRNA" evidence="1">
    <location>
        <begin position="315"/>
        <end position="316"/>
    </location>
</feature>
<feature type="active site" description="Nucleophile" evidence="1">
    <location>
        <position position="99"/>
    </location>
</feature>
<feature type="active site" description="Cysteine persulfide intermediate" evidence="1">
    <location>
        <position position="201"/>
    </location>
</feature>
<feature type="binding site" evidence="1">
    <location>
        <begin position="8"/>
        <end position="15"/>
    </location>
    <ligand>
        <name>ATP</name>
        <dbReference type="ChEBI" id="CHEBI:30616"/>
    </ligand>
</feature>
<feature type="binding site" evidence="1">
    <location>
        <position position="34"/>
    </location>
    <ligand>
        <name>ATP</name>
        <dbReference type="ChEBI" id="CHEBI:30616"/>
    </ligand>
</feature>
<feature type="binding site" evidence="1">
    <location>
        <position position="123"/>
    </location>
    <ligand>
        <name>ATP</name>
        <dbReference type="ChEBI" id="CHEBI:30616"/>
    </ligand>
</feature>
<feature type="site" description="Interaction with tRNA" evidence="1">
    <location>
        <position position="124"/>
    </location>
</feature>
<feature type="site" description="Interaction with tRNA" evidence="1">
    <location>
        <position position="350"/>
    </location>
</feature>
<feature type="disulfide bond" description="Alternate" evidence="1">
    <location>
        <begin position="99"/>
        <end position="201"/>
    </location>
</feature>
<comment type="function">
    <text evidence="1">Catalyzes the 2-thiolation of uridine at the wobble position (U34) of tRNA, leading to the formation of s(2)U34.</text>
</comment>
<comment type="catalytic activity">
    <reaction evidence="1">
        <text>S-sulfanyl-L-cysteinyl-[protein] + uridine(34) in tRNA + AH2 + ATP = 2-thiouridine(34) in tRNA + L-cysteinyl-[protein] + A + AMP + diphosphate + H(+)</text>
        <dbReference type="Rhea" id="RHEA:47032"/>
        <dbReference type="Rhea" id="RHEA-COMP:10131"/>
        <dbReference type="Rhea" id="RHEA-COMP:11726"/>
        <dbReference type="Rhea" id="RHEA-COMP:11727"/>
        <dbReference type="Rhea" id="RHEA-COMP:11728"/>
        <dbReference type="ChEBI" id="CHEBI:13193"/>
        <dbReference type="ChEBI" id="CHEBI:15378"/>
        <dbReference type="ChEBI" id="CHEBI:17499"/>
        <dbReference type="ChEBI" id="CHEBI:29950"/>
        <dbReference type="ChEBI" id="CHEBI:30616"/>
        <dbReference type="ChEBI" id="CHEBI:33019"/>
        <dbReference type="ChEBI" id="CHEBI:61963"/>
        <dbReference type="ChEBI" id="CHEBI:65315"/>
        <dbReference type="ChEBI" id="CHEBI:87170"/>
        <dbReference type="ChEBI" id="CHEBI:456215"/>
        <dbReference type="EC" id="2.8.1.13"/>
    </reaction>
</comment>
<comment type="subcellular location">
    <subcellularLocation>
        <location evidence="1">Cytoplasm</location>
    </subcellularLocation>
</comment>
<comment type="similarity">
    <text evidence="1">Belongs to the MnmA/TRMU family.</text>
</comment>
<accession>B2HVN5</accession>
<organism>
    <name type="scientific">Acinetobacter baumannii (strain ACICU)</name>
    <dbReference type="NCBI Taxonomy" id="405416"/>
    <lineage>
        <taxon>Bacteria</taxon>
        <taxon>Pseudomonadati</taxon>
        <taxon>Pseudomonadota</taxon>
        <taxon>Gammaproteobacteria</taxon>
        <taxon>Moraxellales</taxon>
        <taxon>Moraxellaceae</taxon>
        <taxon>Acinetobacter</taxon>
        <taxon>Acinetobacter calcoaceticus/baumannii complex</taxon>
    </lineage>
</organism>
<name>MNMA_ACIBC</name>
<reference key="1">
    <citation type="journal article" date="2008" name="Antimicrob. Agents Chemother.">
        <title>Whole-genome pyrosequencing of an epidemic multidrug-resistant Acinetobacter baumannii strain belonging to the European clone II group.</title>
        <authorList>
            <person name="Iacono M."/>
            <person name="Villa L."/>
            <person name="Fortini D."/>
            <person name="Bordoni R."/>
            <person name="Imperi F."/>
            <person name="Bonnal R.J."/>
            <person name="Sicheritz-Ponten T."/>
            <person name="De Bellis G."/>
            <person name="Visca P."/>
            <person name="Cassone A."/>
            <person name="Carattoli A."/>
        </authorList>
    </citation>
    <scope>NUCLEOTIDE SEQUENCE [LARGE SCALE GENOMIC DNA]</scope>
    <source>
        <strain>ACICU</strain>
    </source>
</reference>
<sequence length="377" mass="41896">MQQRVIVGMSGGVDSSVSAALLLQQGYQVEGLFMKNWEEDDGTEYCTAMEDLADAQAVADKIGIKLHTANFAMEYWDRVFEHFLAEYAAGRTPNPDILCNKEIKFRAFLDHAMTLGADFIATGHYARRAETAYNSKGEAYAPLLRGLDKNKDQTYFLHAVHGREINKTLFPVGEIEKPEVRRIAEELDLATAKKKDSTGICFIGERRFNDFLKQYLPAQPGKIVLDNGKEVGEHHGLMYYTLGQRGGIGLGGMKGASEGAWFVLHKDVANNRLVVGQGHDHPLMQSTQLWSEAIDWVAGEQNIPAEGLRCTAKTRYRQPDQACTVFIDENSEHGVRVEFDEPQRAVTPGQSVVFYSDEVCLGGGVIHHTNAPTPNFI</sequence>
<keyword id="KW-0067">ATP-binding</keyword>
<keyword id="KW-0963">Cytoplasm</keyword>
<keyword id="KW-1015">Disulfide bond</keyword>
<keyword id="KW-0547">Nucleotide-binding</keyword>
<keyword id="KW-0694">RNA-binding</keyword>
<keyword id="KW-0808">Transferase</keyword>
<keyword id="KW-0819">tRNA processing</keyword>
<keyword id="KW-0820">tRNA-binding</keyword>
<evidence type="ECO:0000255" key="1">
    <source>
        <dbReference type="HAMAP-Rule" id="MF_00144"/>
    </source>
</evidence>
<protein>
    <recommendedName>
        <fullName evidence="1">tRNA-specific 2-thiouridylase MnmA</fullName>
        <ecNumber evidence="1">2.8.1.13</ecNumber>
    </recommendedName>
</protein>
<gene>
    <name evidence="1" type="primary">mnmA</name>
    <name type="ordered locus">ACICU_02645</name>
</gene>
<proteinExistence type="inferred from homology"/>
<dbReference type="EC" id="2.8.1.13" evidence="1"/>
<dbReference type="EMBL" id="CP000863">
    <property type="protein sequence ID" value="ACC57957.1"/>
    <property type="molecule type" value="Genomic_DNA"/>
</dbReference>
<dbReference type="RefSeq" id="WP_001187603.1">
    <property type="nucleotide sequence ID" value="NZ_CP031380.1"/>
</dbReference>
<dbReference type="SMR" id="B2HVN5"/>
<dbReference type="KEGG" id="abc:ACICU_02645"/>
<dbReference type="HOGENOM" id="CLU_035188_1_0_6"/>
<dbReference type="Proteomes" id="UP000008839">
    <property type="component" value="Chromosome"/>
</dbReference>
<dbReference type="GO" id="GO:0005737">
    <property type="term" value="C:cytoplasm"/>
    <property type="evidence" value="ECO:0007669"/>
    <property type="project" value="UniProtKB-SubCell"/>
</dbReference>
<dbReference type="GO" id="GO:0005524">
    <property type="term" value="F:ATP binding"/>
    <property type="evidence" value="ECO:0007669"/>
    <property type="project" value="UniProtKB-KW"/>
</dbReference>
<dbReference type="GO" id="GO:0000049">
    <property type="term" value="F:tRNA binding"/>
    <property type="evidence" value="ECO:0007669"/>
    <property type="project" value="UniProtKB-KW"/>
</dbReference>
<dbReference type="GO" id="GO:0103016">
    <property type="term" value="F:tRNA-uridine 2-sulfurtransferase activity"/>
    <property type="evidence" value="ECO:0007669"/>
    <property type="project" value="UniProtKB-EC"/>
</dbReference>
<dbReference type="GO" id="GO:0002143">
    <property type="term" value="P:tRNA wobble position uridine thiolation"/>
    <property type="evidence" value="ECO:0007669"/>
    <property type="project" value="TreeGrafter"/>
</dbReference>
<dbReference type="CDD" id="cd01998">
    <property type="entry name" value="MnmA_TRMU-like"/>
    <property type="match status" value="1"/>
</dbReference>
<dbReference type="FunFam" id="2.30.30.280:FF:000001">
    <property type="entry name" value="tRNA-specific 2-thiouridylase MnmA"/>
    <property type="match status" value="1"/>
</dbReference>
<dbReference type="FunFam" id="2.40.30.10:FF:000023">
    <property type="entry name" value="tRNA-specific 2-thiouridylase MnmA"/>
    <property type="match status" value="1"/>
</dbReference>
<dbReference type="FunFam" id="3.40.50.620:FF:000004">
    <property type="entry name" value="tRNA-specific 2-thiouridylase MnmA"/>
    <property type="match status" value="1"/>
</dbReference>
<dbReference type="Gene3D" id="2.30.30.280">
    <property type="entry name" value="Adenine nucleotide alpha hydrolases-like domains"/>
    <property type="match status" value="1"/>
</dbReference>
<dbReference type="Gene3D" id="3.40.50.620">
    <property type="entry name" value="HUPs"/>
    <property type="match status" value="1"/>
</dbReference>
<dbReference type="Gene3D" id="2.40.30.10">
    <property type="entry name" value="Translation factors"/>
    <property type="match status" value="1"/>
</dbReference>
<dbReference type="HAMAP" id="MF_00144">
    <property type="entry name" value="tRNA_thiouridyl_MnmA"/>
    <property type="match status" value="1"/>
</dbReference>
<dbReference type="InterPro" id="IPR004506">
    <property type="entry name" value="MnmA-like"/>
</dbReference>
<dbReference type="InterPro" id="IPR046885">
    <property type="entry name" value="MnmA-like_C"/>
</dbReference>
<dbReference type="InterPro" id="IPR046884">
    <property type="entry name" value="MnmA-like_central"/>
</dbReference>
<dbReference type="InterPro" id="IPR023382">
    <property type="entry name" value="MnmA-like_central_sf"/>
</dbReference>
<dbReference type="InterPro" id="IPR014729">
    <property type="entry name" value="Rossmann-like_a/b/a_fold"/>
</dbReference>
<dbReference type="NCBIfam" id="NF001138">
    <property type="entry name" value="PRK00143.1"/>
    <property type="match status" value="1"/>
</dbReference>
<dbReference type="NCBIfam" id="TIGR00420">
    <property type="entry name" value="trmU"/>
    <property type="match status" value="1"/>
</dbReference>
<dbReference type="PANTHER" id="PTHR11933:SF5">
    <property type="entry name" value="MITOCHONDRIAL TRNA-SPECIFIC 2-THIOURIDYLASE 1"/>
    <property type="match status" value="1"/>
</dbReference>
<dbReference type="PANTHER" id="PTHR11933">
    <property type="entry name" value="TRNA 5-METHYLAMINOMETHYL-2-THIOURIDYLATE -METHYLTRANSFERASE"/>
    <property type="match status" value="1"/>
</dbReference>
<dbReference type="Pfam" id="PF03054">
    <property type="entry name" value="tRNA_Me_trans"/>
    <property type="match status" value="1"/>
</dbReference>
<dbReference type="Pfam" id="PF20258">
    <property type="entry name" value="tRNA_Me_trans_C"/>
    <property type="match status" value="1"/>
</dbReference>
<dbReference type="Pfam" id="PF20259">
    <property type="entry name" value="tRNA_Me_trans_M"/>
    <property type="match status" value="1"/>
</dbReference>
<dbReference type="SUPFAM" id="SSF52402">
    <property type="entry name" value="Adenine nucleotide alpha hydrolases-like"/>
    <property type="match status" value="1"/>
</dbReference>